<sequence>MVRLREIPRTATFAWSPGAASPLIATGTRAGAVDVDFSNQTCLELWDLALSRHETGGELQPVAKIDTDSGFNDLAWTESEDNSRGVIAGALENGSLDLWDADKLLNGSDDAVISRTSKHSGAVKALQFNPKHSNLLATGGAKGELYISDLDNIANPYRLGGTAARADDIECLDWNKKVAHILVTGSSAGFVTVWDVKTKKESLTLNNMGRKAVSAVAWDPEKPTKLVTATPLESDPLICVWDLRNSHAPERTLRGHESGVLSLSWCAQDPDLLLSSGKDNRTMCWNPQTGHAYGEFPVVTNWTFQTRWNPHNPNFFATASFDGKISIQTIQNTSTETAQAIADQNQALDGEDFFAKAQTQPQVSSFSLPKPPKWLERPCSATFGFGGRVVSVNLVEKGQRASKIKITPFEVDEAVGKSTETFETALKEGDLRSICESRAANAGSDEEKADWKVIEALISKDPRKGLVEYLGFADQADEAADSLSKLGLDKEEEVNGEVAKESRGSGAKKHRRLQSMFDANPEADSFLSDLAASKGAKTNNPFHIFNGSENEADTGITRALLLGDFEKALDVALKEDRLSDAFMIAICGGPKCIEKAQEHYFQKQTNSPNYVRLLASIVGKNLWDVVYNADLSNWKEVMAALCTFADEKDFADLCEALGDRLEEELRNNEDKGMRKDASFCFLAGSKLEKVVAIWIEELREHEQKAIETAADDSAFSIHVRALQGLIEKVTIFRQVTKFEDTERTKESDWKLSTLYDKYIEYADVVATHGRLQVAQKYLDLVPEKHPEAEIARNRIKLATRQATPQRTQPAAATVTRAALNKPLPQPNAFQPQRAYSPATPAAVPSPYAPAAAAANAYAPPTTATNPYAPSTASAPAQPVNPYAPPAGGSSYTPAGYQPPKAPAYGAQPLGGGVPPPPRASNQSPAPTVTTYTTATNLPAWNDLPEGFAKAPTPRRSTPAAATVASPFPNQSPTLTQGPPPPAGQRAPSVPPPPKGTAPPPRMTSPPAAQPASTTMPPPPANPYASLPQSPPMASTMGVPASIPRGPSPYNAPPTMPPPPNRYAPSPAAQAASPQLQTRAPVPPPPQAAASPYAPQPPAAGHYVPSTPPPHVQPPPQQAPPPQAAPGSRPSTASSQKKPAPAPPKYPPGDRSHIPADAMPVYEILSADMQRVKSRAPSSFKAQVDDAERRLNILFDHLNNEDLLKPNTIADMAELARAIQARDYETARTIHVDIMTNRLDECGNWMVGVKRLISMSRATP</sequence>
<reference key="1">
    <citation type="journal article" date="2007" name="Nat. Biotechnol.">
        <title>Genome sequencing and analysis of the versatile cell factory Aspergillus niger CBS 513.88.</title>
        <authorList>
            <person name="Pel H.J."/>
            <person name="de Winde J.H."/>
            <person name="Archer D.B."/>
            <person name="Dyer P.S."/>
            <person name="Hofmann G."/>
            <person name="Schaap P.J."/>
            <person name="Turner G."/>
            <person name="de Vries R.P."/>
            <person name="Albang R."/>
            <person name="Albermann K."/>
            <person name="Andersen M.R."/>
            <person name="Bendtsen J.D."/>
            <person name="Benen J.A.E."/>
            <person name="van den Berg M."/>
            <person name="Breestraat S."/>
            <person name="Caddick M.X."/>
            <person name="Contreras R."/>
            <person name="Cornell M."/>
            <person name="Coutinho P.M."/>
            <person name="Danchin E.G.J."/>
            <person name="Debets A.J.M."/>
            <person name="Dekker P."/>
            <person name="van Dijck P.W.M."/>
            <person name="van Dijk A."/>
            <person name="Dijkhuizen L."/>
            <person name="Driessen A.J.M."/>
            <person name="d'Enfert C."/>
            <person name="Geysens S."/>
            <person name="Goosen C."/>
            <person name="Groot G.S.P."/>
            <person name="de Groot P.W.J."/>
            <person name="Guillemette T."/>
            <person name="Henrissat B."/>
            <person name="Herweijer M."/>
            <person name="van den Hombergh J.P.T.W."/>
            <person name="van den Hondel C.A.M.J.J."/>
            <person name="van der Heijden R.T.J.M."/>
            <person name="van der Kaaij R.M."/>
            <person name="Klis F.M."/>
            <person name="Kools H.J."/>
            <person name="Kubicek C.P."/>
            <person name="van Kuyk P.A."/>
            <person name="Lauber J."/>
            <person name="Lu X."/>
            <person name="van der Maarel M.J.E.C."/>
            <person name="Meulenberg R."/>
            <person name="Menke H."/>
            <person name="Mortimer M.A."/>
            <person name="Nielsen J."/>
            <person name="Oliver S.G."/>
            <person name="Olsthoorn M."/>
            <person name="Pal K."/>
            <person name="van Peij N.N.M.E."/>
            <person name="Ram A.F.J."/>
            <person name="Rinas U."/>
            <person name="Roubos J.A."/>
            <person name="Sagt C.M.J."/>
            <person name="Schmoll M."/>
            <person name="Sun J."/>
            <person name="Ussery D."/>
            <person name="Varga J."/>
            <person name="Vervecken W."/>
            <person name="van de Vondervoort P.J.J."/>
            <person name="Wedler H."/>
            <person name="Woesten H.A.B."/>
            <person name="Zeng A.-P."/>
            <person name="van Ooyen A.J.J."/>
            <person name="Visser J."/>
            <person name="Stam H."/>
        </authorList>
    </citation>
    <scope>NUCLEOTIDE SEQUENCE [LARGE SCALE GENOMIC DNA]</scope>
    <source>
        <strain>ATCC MYA-4892 / CBS 513.88 / FGSC A1513</strain>
    </source>
</reference>
<evidence type="ECO:0000250" key="1"/>
<evidence type="ECO:0000255" key="2">
    <source>
        <dbReference type="PROSITE-ProRule" id="PRU00221"/>
    </source>
</evidence>
<evidence type="ECO:0000256" key="3">
    <source>
        <dbReference type="SAM" id="MobiDB-lite"/>
    </source>
</evidence>
<evidence type="ECO:0000305" key="4"/>
<dbReference type="EMBL" id="AM269996">
    <property type="protein sequence ID" value="CAK96387.1"/>
    <property type="molecule type" value="Genomic_DNA"/>
</dbReference>
<dbReference type="RefSeq" id="XP_001399310.1">
    <property type="nucleotide sequence ID" value="XM_001399273.2"/>
</dbReference>
<dbReference type="SMR" id="A2QBZ0"/>
<dbReference type="EnsemblFungi" id="CAK96387">
    <property type="protein sequence ID" value="CAK96387"/>
    <property type="gene ID" value="An02g01690"/>
</dbReference>
<dbReference type="GeneID" id="4978655"/>
<dbReference type="KEGG" id="ang:An02g01690"/>
<dbReference type="VEuPathDB" id="FungiDB:An02g01690"/>
<dbReference type="HOGENOM" id="CLU_003033_2_0_1"/>
<dbReference type="Proteomes" id="UP000006706">
    <property type="component" value="Chromosome 4R"/>
</dbReference>
<dbReference type="GO" id="GO:0030127">
    <property type="term" value="C:COPII vesicle coat"/>
    <property type="evidence" value="ECO:0007669"/>
    <property type="project" value="TreeGrafter"/>
</dbReference>
<dbReference type="GO" id="GO:0070971">
    <property type="term" value="C:endoplasmic reticulum exit site"/>
    <property type="evidence" value="ECO:0007669"/>
    <property type="project" value="TreeGrafter"/>
</dbReference>
<dbReference type="GO" id="GO:0005789">
    <property type="term" value="C:endoplasmic reticulum membrane"/>
    <property type="evidence" value="ECO:0007669"/>
    <property type="project" value="UniProtKB-SubCell"/>
</dbReference>
<dbReference type="GO" id="GO:0005198">
    <property type="term" value="F:structural molecule activity"/>
    <property type="evidence" value="ECO:0007669"/>
    <property type="project" value="TreeGrafter"/>
</dbReference>
<dbReference type="GO" id="GO:0090110">
    <property type="term" value="P:COPII-coated vesicle cargo loading"/>
    <property type="evidence" value="ECO:0007669"/>
    <property type="project" value="TreeGrafter"/>
</dbReference>
<dbReference type="GO" id="GO:0007029">
    <property type="term" value="P:endoplasmic reticulum organization"/>
    <property type="evidence" value="ECO:0007669"/>
    <property type="project" value="TreeGrafter"/>
</dbReference>
<dbReference type="GO" id="GO:0015031">
    <property type="term" value="P:protein transport"/>
    <property type="evidence" value="ECO:0007669"/>
    <property type="project" value="UniProtKB-KW"/>
</dbReference>
<dbReference type="FunFam" id="1.20.940.10:FF:000007">
    <property type="entry name" value="Protein transport protein (SEC31), putative"/>
    <property type="match status" value="1"/>
</dbReference>
<dbReference type="FunFam" id="2.130.10.10:FF:000193">
    <property type="entry name" value="Protein transport protein SEC31, putative"/>
    <property type="match status" value="1"/>
</dbReference>
<dbReference type="Gene3D" id="1.25.40.1030">
    <property type="match status" value="1"/>
</dbReference>
<dbReference type="Gene3D" id="1.20.940.10">
    <property type="entry name" value="Functional domain of the splicing factor Prp18"/>
    <property type="match status" value="1"/>
</dbReference>
<dbReference type="Gene3D" id="2.130.10.10">
    <property type="entry name" value="YVTN repeat-like/Quinoprotein amine dehydrogenase"/>
    <property type="match status" value="1"/>
</dbReference>
<dbReference type="InterPro" id="IPR024298">
    <property type="entry name" value="Sec16_Sec23-bd"/>
</dbReference>
<dbReference type="InterPro" id="IPR040251">
    <property type="entry name" value="SEC31-like"/>
</dbReference>
<dbReference type="InterPro" id="IPR009917">
    <property type="entry name" value="SRA1/Sec31"/>
</dbReference>
<dbReference type="InterPro" id="IPR015943">
    <property type="entry name" value="WD40/YVTN_repeat-like_dom_sf"/>
</dbReference>
<dbReference type="InterPro" id="IPR036322">
    <property type="entry name" value="WD40_repeat_dom_sf"/>
</dbReference>
<dbReference type="InterPro" id="IPR001680">
    <property type="entry name" value="WD40_rpt"/>
</dbReference>
<dbReference type="PANTHER" id="PTHR13923">
    <property type="entry name" value="SEC31-RELATED PROTEIN"/>
    <property type="match status" value="1"/>
</dbReference>
<dbReference type="PANTHER" id="PTHR13923:SF11">
    <property type="entry name" value="SECRETORY 31, ISOFORM D"/>
    <property type="match status" value="1"/>
</dbReference>
<dbReference type="Pfam" id="PF07304">
    <property type="entry name" value="SRA1"/>
    <property type="match status" value="1"/>
</dbReference>
<dbReference type="Pfam" id="PF12931">
    <property type="entry name" value="TPR_Sec16"/>
    <property type="match status" value="1"/>
</dbReference>
<dbReference type="Pfam" id="PF00400">
    <property type="entry name" value="WD40"/>
    <property type="match status" value="1"/>
</dbReference>
<dbReference type="SMART" id="SM00320">
    <property type="entry name" value="WD40"/>
    <property type="match status" value="6"/>
</dbReference>
<dbReference type="SUPFAM" id="SSF50978">
    <property type="entry name" value="WD40 repeat-like"/>
    <property type="match status" value="1"/>
</dbReference>
<dbReference type="PROSITE" id="PS50082">
    <property type="entry name" value="WD_REPEATS_2"/>
    <property type="match status" value="2"/>
</dbReference>
<dbReference type="PROSITE" id="PS50294">
    <property type="entry name" value="WD_REPEATS_REGION"/>
    <property type="match status" value="1"/>
</dbReference>
<protein>
    <recommendedName>
        <fullName>Protein transport protein sec31</fullName>
    </recommendedName>
</protein>
<gene>
    <name type="primary">sec31</name>
    <name type="ORF">An02g01690</name>
</gene>
<comment type="function">
    <text evidence="1">Component of the coat protein complex II (COPII) which promotes the formation of transport vesicles from the endoplasmic reticulum (ER). The coat has two main functions, the physical deformation of the endoplasmic reticulum membrane into vesicles and the selection of cargo molecules (By similarity).</text>
</comment>
<comment type="subunit">
    <text evidence="1">The COPII coat is composed of at least 5 proteins: the sec23/24 complex, the sec13/31 complex, and the protein sar1. sec13 and sec31 make a 2:2 tetramer that forms the edge element of the COPII outer coat. The tetramer self-assembles in multiple copies to form the complete polyhedral cage. Interacts (via WD 8) with sec13 (By similarity).</text>
</comment>
<comment type="subcellular location">
    <subcellularLocation>
        <location evidence="1">Cytoplasmic vesicle</location>
        <location evidence="1">COPII-coated vesicle membrane</location>
        <topology evidence="1">Peripheral membrane protein</topology>
        <orientation evidence="1">Cytoplasmic side</orientation>
    </subcellularLocation>
    <subcellularLocation>
        <location evidence="1">Endoplasmic reticulum membrane</location>
        <topology evidence="1">Peripheral membrane protein</topology>
        <orientation evidence="1">Cytoplasmic side</orientation>
    </subcellularLocation>
</comment>
<comment type="similarity">
    <text evidence="4">Belongs to the WD repeat SEC31 family.</text>
</comment>
<proteinExistence type="inferred from homology"/>
<keyword id="KW-0968">Cytoplasmic vesicle</keyword>
<keyword id="KW-0256">Endoplasmic reticulum</keyword>
<keyword id="KW-0931">ER-Golgi transport</keyword>
<keyword id="KW-0472">Membrane</keyword>
<keyword id="KW-0653">Protein transport</keyword>
<keyword id="KW-1185">Reference proteome</keyword>
<keyword id="KW-0677">Repeat</keyword>
<keyword id="KW-0813">Transport</keyword>
<keyword id="KW-0853">WD repeat</keyword>
<feature type="chain" id="PRO_5000219541" description="Protein transport protein sec31">
    <location>
        <begin position="1"/>
        <end position="1259"/>
    </location>
</feature>
<feature type="repeat" description="WD 1">
    <location>
        <begin position="5"/>
        <end position="47"/>
    </location>
</feature>
<feature type="repeat" description="WD 2">
    <location>
        <begin position="66"/>
        <end position="109"/>
    </location>
</feature>
<feature type="repeat" description="WD 3">
    <location>
        <begin position="118"/>
        <end position="158"/>
    </location>
</feature>
<feature type="repeat" description="WD 4">
    <location>
        <begin position="164"/>
        <end position="204"/>
    </location>
</feature>
<feature type="repeat" description="WD 5">
    <location>
        <begin position="208"/>
        <end position="251"/>
    </location>
</feature>
<feature type="repeat" description="WD 6">
    <location>
        <begin position="255"/>
        <end position="295"/>
    </location>
</feature>
<feature type="repeat" description="WD 7">
    <location>
        <begin position="298"/>
        <end position="338"/>
    </location>
</feature>
<feature type="repeat" description="WD 8; interaction with sec13" evidence="2">
    <location>
        <begin position="382"/>
        <end position="407"/>
    </location>
</feature>
<feature type="region of interest" description="Disordered" evidence="3">
    <location>
        <begin position="822"/>
        <end position="845"/>
    </location>
</feature>
<feature type="region of interest" description="Disordered" evidence="3">
    <location>
        <begin position="868"/>
        <end position="1154"/>
    </location>
</feature>
<feature type="compositionally biased region" description="Low complexity" evidence="3">
    <location>
        <begin position="834"/>
        <end position="845"/>
    </location>
</feature>
<feature type="compositionally biased region" description="Low complexity" evidence="3">
    <location>
        <begin position="924"/>
        <end position="939"/>
    </location>
</feature>
<feature type="compositionally biased region" description="Low complexity" evidence="3">
    <location>
        <begin position="950"/>
        <end position="968"/>
    </location>
</feature>
<feature type="compositionally biased region" description="Pro residues" evidence="3">
    <location>
        <begin position="977"/>
        <end position="1003"/>
    </location>
</feature>
<feature type="compositionally biased region" description="Low complexity" evidence="3">
    <location>
        <begin position="1004"/>
        <end position="1014"/>
    </location>
</feature>
<feature type="compositionally biased region" description="Pro residues" evidence="3">
    <location>
        <begin position="1045"/>
        <end position="1061"/>
    </location>
</feature>
<feature type="compositionally biased region" description="Low complexity" evidence="3">
    <location>
        <begin position="1062"/>
        <end position="1079"/>
    </location>
</feature>
<feature type="compositionally biased region" description="Pro residues" evidence="3">
    <location>
        <begin position="1105"/>
        <end position="1123"/>
    </location>
</feature>
<feature type="compositionally biased region" description="Low complexity" evidence="3">
    <location>
        <begin position="1129"/>
        <end position="1138"/>
    </location>
</feature>
<name>SEC31_ASPNC</name>
<organism>
    <name type="scientific">Aspergillus niger (strain ATCC MYA-4892 / CBS 513.88 / FGSC A1513)</name>
    <dbReference type="NCBI Taxonomy" id="425011"/>
    <lineage>
        <taxon>Eukaryota</taxon>
        <taxon>Fungi</taxon>
        <taxon>Dikarya</taxon>
        <taxon>Ascomycota</taxon>
        <taxon>Pezizomycotina</taxon>
        <taxon>Eurotiomycetes</taxon>
        <taxon>Eurotiomycetidae</taxon>
        <taxon>Eurotiales</taxon>
        <taxon>Aspergillaceae</taxon>
        <taxon>Aspergillus</taxon>
        <taxon>Aspergillus subgen. Circumdati</taxon>
    </lineage>
</organism>
<accession>A2QBZ0</accession>